<feature type="chain" id="PRO_1000019342" description="Ferrochelatase">
    <location>
        <begin position="1"/>
        <end position="340"/>
    </location>
</feature>
<feature type="binding site" evidence="1">
    <location>
        <position position="189"/>
    </location>
    <ligand>
        <name>Fe cation</name>
        <dbReference type="ChEBI" id="CHEBI:24875"/>
    </ligand>
</feature>
<feature type="binding site" evidence="1">
    <location>
        <position position="292"/>
    </location>
    <ligand>
        <name>Fe cation</name>
        <dbReference type="ChEBI" id="CHEBI:24875"/>
    </ligand>
</feature>
<proteinExistence type="inferred from homology"/>
<accession>Q48MT5</accession>
<keyword id="KW-0963">Cytoplasm</keyword>
<keyword id="KW-0350">Heme biosynthesis</keyword>
<keyword id="KW-0408">Iron</keyword>
<keyword id="KW-0456">Lyase</keyword>
<keyword id="KW-0479">Metal-binding</keyword>
<keyword id="KW-0627">Porphyrin biosynthesis</keyword>
<comment type="function">
    <text evidence="1">Catalyzes the ferrous insertion into protoporphyrin IX.</text>
</comment>
<comment type="catalytic activity">
    <reaction evidence="1">
        <text>heme b + 2 H(+) = protoporphyrin IX + Fe(2+)</text>
        <dbReference type="Rhea" id="RHEA:22584"/>
        <dbReference type="ChEBI" id="CHEBI:15378"/>
        <dbReference type="ChEBI" id="CHEBI:29033"/>
        <dbReference type="ChEBI" id="CHEBI:57306"/>
        <dbReference type="ChEBI" id="CHEBI:60344"/>
        <dbReference type="EC" id="4.98.1.1"/>
    </reaction>
</comment>
<comment type="pathway">
    <text evidence="1">Porphyrin-containing compound metabolism; protoheme biosynthesis; protoheme from protoporphyrin-IX: step 1/1.</text>
</comment>
<comment type="subcellular location">
    <subcellularLocation>
        <location evidence="1">Cytoplasm</location>
    </subcellularLocation>
</comment>
<comment type="similarity">
    <text evidence="1">Belongs to the ferrochelatase family.</text>
</comment>
<organism>
    <name type="scientific">Pseudomonas savastanoi pv. phaseolicola (strain 1448A / Race 6)</name>
    <name type="common">Pseudomonas syringae pv. phaseolicola (strain 1448A / Race 6)</name>
    <dbReference type="NCBI Taxonomy" id="264730"/>
    <lineage>
        <taxon>Bacteria</taxon>
        <taxon>Pseudomonadati</taxon>
        <taxon>Pseudomonadota</taxon>
        <taxon>Gammaproteobacteria</taxon>
        <taxon>Pseudomonadales</taxon>
        <taxon>Pseudomonadaceae</taxon>
        <taxon>Pseudomonas</taxon>
    </lineage>
</organism>
<gene>
    <name evidence="1" type="primary">hemH</name>
    <name type="ordered locus">PSPPH_1016</name>
</gene>
<evidence type="ECO:0000255" key="1">
    <source>
        <dbReference type="HAMAP-Rule" id="MF_00323"/>
    </source>
</evidence>
<protein>
    <recommendedName>
        <fullName evidence="1">Ferrochelatase</fullName>
        <ecNumber evidence="1">4.98.1.1</ecNumber>
    </recommendedName>
    <alternativeName>
        <fullName evidence="1">Heme synthase</fullName>
    </alternativeName>
    <alternativeName>
        <fullName evidence="1">Protoheme ferro-lyase</fullName>
    </alternativeName>
</protein>
<name>HEMH_PSE14</name>
<sequence length="340" mass="38414">MTDHALLLVNLGSPASTQVADVRSYLNQFLMDPYVIDLPWPVRRLLVSLILIKRPEQSAHAYASIWWDEGSPLVVLSKRLQQAMKKEWSHGPVELAMRYGEPSIETVLTRLSEQGFKKVTLAPLYPQFADSTVTTVIEEAKRVVRAKSLKMQFSVLQPFYDQPEYLSALVESVRPHLEQPYDHLLLSFHGLPERHLHKLDPTGKHCLKDDCCMTAPAEVLATCYRAQCIQSAATFAKRMGIPDGKWSVSFQSRLGRAKWIEPYTEARLDELAAQGVKRLLVMCPAFVADCIETLEEIGDRGAEQFKEAGGEELVLVPCLNDDPNWAKELNRLCERAPLML</sequence>
<reference key="1">
    <citation type="journal article" date="2005" name="J. Bacteriol.">
        <title>Whole-genome sequence analysis of Pseudomonas syringae pv. phaseolicola 1448A reveals divergence among pathovars in genes involved in virulence and transposition.</title>
        <authorList>
            <person name="Joardar V."/>
            <person name="Lindeberg M."/>
            <person name="Jackson R.W."/>
            <person name="Selengut J."/>
            <person name="Dodson R."/>
            <person name="Brinkac L.M."/>
            <person name="Daugherty S.C."/>
            <person name="DeBoy R.T."/>
            <person name="Durkin A.S."/>
            <person name="Gwinn Giglio M."/>
            <person name="Madupu R."/>
            <person name="Nelson W.C."/>
            <person name="Rosovitz M.J."/>
            <person name="Sullivan S.A."/>
            <person name="Crabtree J."/>
            <person name="Creasy T."/>
            <person name="Davidsen T.M."/>
            <person name="Haft D.H."/>
            <person name="Zafar N."/>
            <person name="Zhou L."/>
            <person name="Halpin R."/>
            <person name="Holley T."/>
            <person name="Khouri H.M."/>
            <person name="Feldblyum T.V."/>
            <person name="White O."/>
            <person name="Fraser C.M."/>
            <person name="Chatterjee A.K."/>
            <person name="Cartinhour S."/>
            <person name="Schneider D."/>
            <person name="Mansfield J.W."/>
            <person name="Collmer A."/>
            <person name="Buell R."/>
        </authorList>
    </citation>
    <scope>NUCLEOTIDE SEQUENCE [LARGE SCALE GENOMIC DNA]</scope>
    <source>
        <strain>1448A / Race 6</strain>
    </source>
</reference>
<dbReference type="EC" id="4.98.1.1" evidence="1"/>
<dbReference type="EMBL" id="CP000058">
    <property type="protein sequence ID" value="AAZ34874.1"/>
    <property type="molecule type" value="Genomic_DNA"/>
</dbReference>
<dbReference type="RefSeq" id="WP_011167857.1">
    <property type="nucleotide sequence ID" value="NC_005773.3"/>
</dbReference>
<dbReference type="SMR" id="Q48MT5"/>
<dbReference type="KEGG" id="psp:PSPPH_1016"/>
<dbReference type="eggNOG" id="COG0276">
    <property type="taxonomic scope" value="Bacteria"/>
</dbReference>
<dbReference type="HOGENOM" id="CLU_018884_0_1_6"/>
<dbReference type="UniPathway" id="UPA00252">
    <property type="reaction ID" value="UER00325"/>
</dbReference>
<dbReference type="Proteomes" id="UP000000551">
    <property type="component" value="Chromosome"/>
</dbReference>
<dbReference type="GO" id="GO:0005737">
    <property type="term" value="C:cytoplasm"/>
    <property type="evidence" value="ECO:0007669"/>
    <property type="project" value="UniProtKB-SubCell"/>
</dbReference>
<dbReference type="GO" id="GO:0004325">
    <property type="term" value="F:ferrochelatase activity"/>
    <property type="evidence" value="ECO:0007669"/>
    <property type="project" value="UniProtKB-UniRule"/>
</dbReference>
<dbReference type="GO" id="GO:0046872">
    <property type="term" value="F:metal ion binding"/>
    <property type="evidence" value="ECO:0007669"/>
    <property type="project" value="UniProtKB-KW"/>
</dbReference>
<dbReference type="GO" id="GO:0006783">
    <property type="term" value="P:heme biosynthetic process"/>
    <property type="evidence" value="ECO:0007669"/>
    <property type="project" value="UniProtKB-UniRule"/>
</dbReference>
<dbReference type="CDD" id="cd00419">
    <property type="entry name" value="Ferrochelatase_C"/>
    <property type="match status" value="1"/>
</dbReference>
<dbReference type="CDD" id="cd03411">
    <property type="entry name" value="Ferrochelatase_N"/>
    <property type="match status" value="1"/>
</dbReference>
<dbReference type="Gene3D" id="3.40.50.1400">
    <property type="match status" value="2"/>
</dbReference>
<dbReference type="HAMAP" id="MF_00323">
    <property type="entry name" value="Ferrochelatase"/>
    <property type="match status" value="1"/>
</dbReference>
<dbReference type="InterPro" id="IPR001015">
    <property type="entry name" value="Ferrochelatase"/>
</dbReference>
<dbReference type="InterPro" id="IPR033644">
    <property type="entry name" value="Ferrochelatase_C"/>
</dbReference>
<dbReference type="InterPro" id="IPR033659">
    <property type="entry name" value="Ferrochelatase_N"/>
</dbReference>
<dbReference type="NCBIfam" id="TIGR00109">
    <property type="entry name" value="hemH"/>
    <property type="match status" value="1"/>
</dbReference>
<dbReference type="PANTHER" id="PTHR11108">
    <property type="entry name" value="FERROCHELATASE"/>
    <property type="match status" value="1"/>
</dbReference>
<dbReference type="PANTHER" id="PTHR11108:SF1">
    <property type="entry name" value="FERROCHELATASE, MITOCHONDRIAL"/>
    <property type="match status" value="1"/>
</dbReference>
<dbReference type="Pfam" id="PF00762">
    <property type="entry name" value="Ferrochelatase"/>
    <property type="match status" value="1"/>
</dbReference>
<dbReference type="SUPFAM" id="SSF53800">
    <property type="entry name" value="Chelatase"/>
    <property type="match status" value="1"/>
</dbReference>